<protein>
    <recommendedName>
        <fullName evidence="1">Large ribosomal subunit protein uL15</fullName>
    </recommendedName>
    <alternativeName>
        <fullName evidence="3">50S ribosomal protein L15</fullName>
    </alternativeName>
</protein>
<reference key="1">
    <citation type="journal article" date="2005" name="Nat. Biotechnol.">
        <title>The complete genome sequence of the meat-borne lactic acid bacterium Lactobacillus sakei 23K.</title>
        <authorList>
            <person name="Chaillou S."/>
            <person name="Champomier-Verges M.-C."/>
            <person name="Cornet M."/>
            <person name="Crutz-Le Coq A.-M."/>
            <person name="Dudez A.-M."/>
            <person name="Martin V."/>
            <person name="Beaufils S."/>
            <person name="Darbon-Rongere E."/>
            <person name="Bossy R."/>
            <person name="Loux V."/>
            <person name="Zagorec M."/>
        </authorList>
    </citation>
    <scope>NUCLEOTIDE SEQUENCE [LARGE SCALE GENOMIC DNA]</scope>
    <source>
        <strain>23K</strain>
    </source>
</reference>
<accession>Q38UT0</accession>
<sequence>MKLHELKPNEGARDVRKRVGRGTSSGTGKTAGRGQKGQKARSKVRLGFEGGQMPLFRRMPKRGFKNINRKEYAVVNLNDLNRFEDGTEITATVLIEAGVVKNELSGVKVLANGELNKKLNIKVSKYSEAAKAAVEAAGGSIEVI</sequence>
<gene>
    <name evidence="1" type="primary">rplO</name>
    <name type="ordered locus">LCA_1746</name>
</gene>
<dbReference type="EMBL" id="CR936503">
    <property type="protein sequence ID" value="CAI56054.1"/>
    <property type="molecule type" value="Genomic_DNA"/>
</dbReference>
<dbReference type="RefSeq" id="WP_011375436.1">
    <property type="nucleotide sequence ID" value="NC_007576.1"/>
</dbReference>
<dbReference type="SMR" id="Q38UT0"/>
<dbReference type="STRING" id="314315.LCA_1746"/>
<dbReference type="GeneID" id="57132662"/>
<dbReference type="KEGG" id="lsa:LCA_1746"/>
<dbReference type="eggNOG" id="COG0200">
    <property type="taxonomic scope" value="Bacteria"/>
</dbReference>
<dbReference type="HOGENOM" id="CLU_055188_4_2_9"/>
<dbReference type="OrthoDB" id="9810293at2"/>
<dbReference type="Proteomes" id="UP000002707">
    <property type="component" value="Chromosome"/>
</dbReference>
<dbReference type="GO" id="GO:0022625">
    <property type="term" value="C:cytosolic large ribosomal subunit"/>
    <property type="evidence" value="ECO:0007669"/>
    <property type="project" value="TreeGrafter"/>
</dbReference>
<dbReference type="GO" id="GO:0019843">
    <property type="term" value="F:rRNA binding"/>
    <property type="evidence" value="ECO:0007669"/>
    <property type="project" value="UniProtKB-UniRule"/>
</dbReference>
<dbReference type="GO" id="GO:0003735">
    <property type="term" value="F:structural constituent of ribosome"/>
    <property type="evidence" value="ECO:0007669"/>
    <property type="project" value="InterPro"/>
</dbReference>
<dbReference type="GO" id="GO:0006412">
    <property type="term" value="P:translation"/>
    <property type="evidence" value="ECO:0007669"/>
    <property type="project" value="UniProtKB-UniRule"/>
</dbReference>
<dbReference type="Gene3D" id="3.100.10.10">
    <property type="match status" value="1"/>
</dbReference>
<dbReference type="HAMAP" id="MF_01341">
    <property type="entry name" value="Ribosomal_uL15"/>
    <property type="match status" value="1"/>
</dbReference>
<dbReference type="InterPro" id="IPR030878">
    <property type="entry name" value="Ribosomal_uL15"/>
</dbReference>
<dbReference type="InterPro" id="IPR021131">
    <property type="entry name" value="Ribosomal_uL15/eL18"/>
</dbReference>
<dbReference type="InterPro" id="IPR036227">
    <property type="entry name" value="Ribosomal_uL15/eL18_sf"/>
</dbReference>
<dbReference type="InterPro" id="IPR005749">
    <property type="entry name" value="Ribosomal_uL15_bac-type"/>
</dbReference>
<dbReference type="NCBIfam" id="TIGR01071">
    <property type="entry name" value="rplO_bact"/>
    <property type="match status" value="1"/>
</dbReference>
<dbReference type="PANTHER" id="PTHR12934">
    <property type="entry name" value="50S RIBOSOMAL PROTEIN L15"/>
    <property type="match status" value="1"/>
</dbReference>
<dbReference type="PANTHER" id="PTHR12934:SF11">
    <property type="entry name" value="LARGE RIBOSOMAL SUBUNIT PROTEIN UL15M"/>
    <property type="match status" value="1"/>
</dbReference>
<dbReference type="Pfam" id="PF00828">
    <property type="entry name" value="Ribosomal_L27A"/>
    <property type="match status" value="1"/>
</dbReference>
<dbReference type="SUPFAM" id="SSF52080">
    <property type="entry name" value="Ribosomal proteins L15p and L18e"/>
    <property type="match status" value="1"/>
</dbReference>
<keyword id="KW-1185">Reference proteome</keyword>
<keyword id="KW-0687">Ribonucleoprotein</keyword>
<keyword id="KW-0689">Ribosomal protein</keyword>
<keyword id="KW-0694">RNA-binding</keyword>
<keyword id="KW-0699">rRNA-binding</keyword>
<comment type="function">
    <text evidence="1">Binds to the 23S rRNA.</text>
</comment>
<comment type="subunit">
    <text evidence="1">Part of the 50S ribosomal subunit.</text>
</comment>
<comment type="similarity">
    <text evidence="1">Belongs to the universal ribosomal protein uL15 family.</text>
</comment>
<feature type="chain" id="PRO_0000251522" description="Large ribosomal subunit protein uL15">
    <location>
        <begin position="1"/>
        <end position="144"/>
    </location>
</feature>
<feature type="region of interest" description="Disordered" evidence="2">
    <location>
        <begin position="1"/>
        <end position="43"/>
    </location>
</feature>
<feature type="compositionally biased region" description="Basic and acidic residues" evidence="2">
    <location>
        <begin position="1"/>
        <end position="14"/>
    </location>
</feature>
<feature type="compositionally biased region" description="Gly residues" evidence="2">
    <location>
        <begin position="23"/>
        <end position="35"/>
    </location>
</feature>
<evidence type="ECO:0000255" key="1">
    <source>
        <dbReference type="HAMAP-Rule" id="MF_01341"/>
    </source>
</evidence>
<evidence type="ECO:0000256" key="2">
    <source>
        <dbReference type="SAM" id="MobiDB-lite"/>
    </source>
</evidence>
<evidence type="ECO:0000305" key="3"/>
<organism>
    <name type="scientific">Latilactobacillus sakei subsp. sakei (strain 23K)</name>
    <name type="common">Lactobacillus sakei subsp. sakei</name>
    <dbReference type="NCBI Taxonomy" id="314315"/>
    <lineage>
        <taxon>Bacteria</taxon>
        <taxon>Bacillati</taxon>
        <taxon>Bacillota</taxon>
        <taxon>Bacilli</taxon>
        <taxon>Lactobacillales</taxon>
        <taxon>Lactobacillaceae</taxon>
        <taxon>Latilactobacillus</taxon>
    </lineage>
</organism>
<proteinExistence type="inferred from homology"/>
<name>RL15_LATSS</name>